<sequence>MSRDTTTPDDAAAFEAAATTSGTATSAGENIPGDLLPLCREHICPVCPEKAQADEQRLRALADLENTKKRLQREKDEQVRYAAETVLADLLPTLDNLDLALQYGQGSAECRNMLVGVEMTRKLLLEALGRHGLEAVGEAGEPFTPELHEAMSHEDRGDMPADHVATVMMKGYRLKERLLRPAKVTVSRTPG</sequence>
<evidence type="ECO:0000255" key="1">
    <source>
        <dbReference type="HAMAP-Rule" id="MF_01151"/>
    </source>
</evidence>
<dbReference type="EMBL" id="AE017285">
    <property type="protein sequence ID" value="AAS95292.1"/>
    <property type="molecule type" value="Genomic_DNA"/>
</dbReference>
<dbReference type="RefSeq" id="WP_010938113.1">
    <property type="nucleotide sequence ID" value="NC_002937.3"/>
</dbReference>
<dbReference type="RefSeq" id="YP_010033.1">
    <property type="nucleotide sequence ID" value="NC_002937.3"/>
</dbReference>
<dbReference type="SMR" id="Q72DW7"/>
<dbReference type="STRING" id="882.DVU_0812"/>
<dbReference type="PaxDb" id="882-DVU_0812"/>
<dbReference type="EnsemblBacteria" id="AAS95292">
    <property type="protein sequence ID" value="AAS95292"/>
    <property type="gene ID" value="DVU_0812"/>
</dbReference>
<dbReference type="KEGG" id="dvu:DVU_0812"/>
<dbReference type="PATRIC" id="fig|882.5.peg.762"/>
<dbReference type="eggNOG" id="COG0576">
    <property type="taxonomic scope" value="Bacteria"/>
</dbReference>
<dbReference type="HOGENOM" id="CLU_057217_5_2_7"/>
<dbReference type="OrthoDB" id="9789811at2"/>
<dbReference type="PhylomeDB" id="Q72DW7"/>
<dbReference type="Proteomes" id="UP000002194">
    <property type="component" value="Chromosome"/>
</dbReference>
<dbReference type="GO" id="GO:0005737">
    <property type="term" value="C:cytoplasm"/>
    <property type="evidence" value="ECO:0007669"/>
    <property type="project" value="UniProtKB-SubCell"/>
</dbReference>
<dbReference type="GO" id="GO:0000774">
    <property type="term" value="F:adenyl-nucleotide exchange factor activity"/>
    <property type="evidence" value="ECO:0007669"/>
    <property type="project" value="InterPro"/>
</dbReference>
<dbReference type="GO" id="GO:0042803">
    <property type="term" value="F:protein homodimerization activity"/>
    <property type="evidence" value="ECO:0007669"/>
    <property type="project" value="InterPro"/>
</dbReference>
<dbReference type="GO" id="GO:0051087">
    <property type="term" value="F:protein-folding chaperone binding"/>
    <property type="evidence" value="ECO:0007669"/>
    <property type="project" value="InterPro"/>
</dbReference>
<dbReference type="GO" id="GO:0051082">
    <property type="term" value="F:unfolded protein binding"/>
    <property type="evidence" value="ECO:0007669"/>
    <property type="project" value="TreeGrafter"/>
</dbReference>
<dbReference type="GO" id="GO:0006457">
    <property type="term" value="P:protein folding"/>
    <property type="evidence" value="ECO:0007669"/>
    <property type="project" value="InterPro"/>
</dbReference>
<dbReference type="CDD" id="cd00446">
    <property type="entry name" value="GrpE"/>
    <property type="match status" value="1"/>
</dbReference>
<dbReference type="FunFam" id="2.30.22.10:FF:000001">
    <property type="entry name" value="Protein GrpE"/>
    <property type="match status" value="1"/>
</dbReference>
<dbReference type="Gene3D" id="3.90.20.20">
    <property type="match status" value="1"/>
</dbReference>
<dbReference type="Gene3D" id="2.30.22.10">
    <property type="entry name" value="Head domain of nucleotide exchange factor GrpE"/>
    <property type="match status" value="1"/>
</dbReference>
<dbReference type="HAMAP" id="MF_01151">
    <property type="entry name" value="GrpE"/>
    <property type="match status" value="1"/>
</dbReference>
<dbReference type="InterPro" id="IPR000740">
    <property type="entry name" value="GrpE"/>
</dbReference>
<dbReference type="InterPro" id="IPR013805">
    <property type="entry name" value="GrpE_coiled_coil"/>
</dbReference>
<dbReference type="InterPro" id="IPR009012">
    <property type="entry name" value="GrpE_head"/>
</dbReference>
<dbReference type="PANTHER" id="PTHR21237">
    <property type="entry name" value="GRPE PROTEIN"/>
    <property type="match status" value="1"/>
</dbReference>
<dbReference type="PANTHER" id="PTHR21237:SF23">
    <property type="entry name" value="GRPE PROTEIN HOMOLOG, MITOCHONDRIAL"/>
    <property type="match status" value="1"/>
</dbReference>
<dbReference type="Pfam" id="PF01025">
    <property type="entry name" value="GrpE"/>
    <property type="match status" value="1"/>
</dbReference>
<dbReference type="PRINTS" id="PR00773">
    <property type="entry name" value="GRPEPROTEIN"/>
</dbReference>
<dbReference type="SUPFAM" id="SSF58014">
    <property type="entry name" value="Coiled-coil domain of nucleotide exchange factor GrpE"/>
    <property type="match status" value="1"/>
</dbReference>
<dbReference type="SUPFAM" id="SSF51064">
    <property type="entry name" value="Head domain of nucleotide exchange factor GrpE"/>
    <property type="match status" value="1"/>
</dbReference>
<dbReference type="PROSITE" id="PS01071">
    <property type="entry name" value="GRPE"/>
    <property type="match status" value="1"/>
</dbReference>
<comment type="function">
    <text evidence="1">Participates actively in the response to hyperosmotic and heat shock by preventing the aggregation of stress-denatured proteins, in association with DnaK and GrpE. It is the nucleotide exchange factor for DnaK and may function as a thermosensor. Unfolded proteins bind initially to DnaJ; upon interaction with the DnaJ-bound protein, DnaK hydrolyzes its bound ATP, resulting in the formation of a stable complex. GrpE releases ADP from DnaK; ATP binding to DnaK triggers the release of the substrate protein, thus completing the reaction cycle. Several rounds of ATP-dependent interactions between DnaJ, DnaK and GrpE are required for fully efficient folding.</text>
</comment>
<comment type="subunit">
    <text evidence="1">Homodimer.</text>
</comment>
<comment type="subcellular location">
    <subcellularLocation>
        <location evidence="1">Cytoplasm</location>
    </subcellularLocation>
</comment>
<comment type="similarity">
    <text evidence="1">Belongs to the GrpE family.</text>
</comment>
<feature type="chain" id="PRO_0000113781" description="Protein GrpE">
    <location>
        <begin position="1"/>
        <end position="191"/>
    </location>
</feature>
<organism>
    <name type="scientific">Nitratidesulfovibrio vulgaris (strain ATCC 29579 / DSM 644 / CCUG 34227 / NCIMB 8303 / VKM B-1760 / Hildenborough)</name>
    <name type="common">Desulfovibrio vulgaris</name>
    <dbReference type="NCBI Taxonomy" id="882"/>
    <lineage>
        <taxon>Bacteria</taxon>
        <taxon>Pseudomonadati</taxon>
        <taxon>Thermodesulfobacteriota</taxon>
        <taxon>Desulfovibrionia</taxon>
        <taxon>Desulfovibrionales</taxon>
        <taxon>Desulfovibrionaceae</taxon>
        <taxon>Nitratidesulfovibrio</taxon>
    </lineage>
</organism>
<accession>Q72DW7</accession>
<gene>
    <name evidence="1" type="primary">grpE</name>
    <name type="ordered locus">DVU_0812</name>
</gene>
<keyword id="KW-0143">Chaperone</keyword>
<keyword id="KW-0963">Cytoplasm</keyword>
<keyword id="KW-1185">Reference proteome</keyword>
<keyword id="KW-0346">Stress response</keyword>
<protein>
    <recommendedName>
        <fullName evidence="1">Protein GrpE</fullName>
    </recommendedName>
    <alternativeName>
        <fullName evidence="1">HSP-70 cofactor</fullName>
    </alternativeName>
</protein>
<reference key="1">
    <citation type="journal article" date="2004" name="Nat. Biotechnol.">
        <title>The genome sequence of the anaerobic, sulfate-reducing bacterium Desulfovibrio vulgaris Hildenborough.</title>
        <authorList>
            <person name="Heidelberg J.F."/>
            <person name="Seshadri R."/>
            <person name="Haveman S.A."/>
            <person name="Hemme C.L."/>
            <person name="Paulsen I.T."/>
            <person name="Kolonay J.F."/>
            <person name="Eisen J.A."/>
            <person name="Ward N.L."/>
            <person name="Methe B.A."/>
            <person name="Brinkac L.M."/>
            <person name="Daugherty S.C."/>
            <person name="DeBoy R.T."/>
            <person name="Dodson R.J."/>
            <person name="Durkin A.S."/>
            <person name="Madupu R."/>
            <person name="Nelson W.C."/>
            <person name="Sullivan S.A."/>
            <person name="Fouts D.E."/>
            <person name="Haft D.H."/>
            <person name="Selengut J."/>
            <person name="Peterson J.D."/>
            <person name="Davidsen T.M."/>
            <person name="Zafar N."/>
            <person name="Zhou L."/>
            <person name="Radune D."/>
            <person name="Dimitrov G."/>
            <person name="Hance M."/>
            <person name="Tran K."/>
            <person name="Khouri H.M."/>
            <person name="Gill J."/>
            <person name="Utterback T.R."/>
            <person name="Feldblyum T.V."/>
            <person name="Wall J.D."/>
            <person name="Voordouw G."/>
            <person name="Fraser C.M."/>
        </authorList>
    </citation>
    <scope>NUCLEOTIDE SEQUENCE [LARGE SCALE GENOMIC DNA]</scope>
    <source>
        <strain>ATCC 29579 / DSM 644 / CCUG 34227 / NCIMB 8303 / VKM B-1760 / Hildenborough</strain>
    </source>
</reference>
<proteinExistence type="inferred from homology"/>
<name>GRPE_NITV2</name>